<name>DNAK_RHOPA</name>
<feature type="chain" id="PRO_0000226003" description="Chaperone protein DnaK">
    <location>
        <begin position="1"/>
        <end position="631"/>
    </location>
</feature>
<feature type="region of interest" description="Disordered" evidence="2">
    <location>
        <begin position="602"/>
        <end position="631"/>
    </location>
</feature>
<feature type="modified residue" description="Phosphothreonine; by autocatalysis" evidence="1">
    <location>
        <position position="198"/>
    </location>
</feature>
<accession>Q6NCY4</accession>
<proteinExistence type="inferred from homology"/>
<protein>
    <recommendedName>
        <fullName evidence="1">Chaperone protein DnaK</fullName>
    </recommendedName>
    <alternativeName>
        <fullName evidence="1">HSP70</fullName>
    </alternativeName>
    <alternativeName>
        <fullName evidence="1">Heat shock 70 kDa protein</fullName>
    </alternativeName>
    <alternativeName>
        <fullName evidence="1">Heat shock protein 70</fullName>
    </alternativeName>
</protein>
<organism>
    <name type="scientific">Rhodopseudomonas palustris (strain ATCC BAA-98 / CGA009)</name>
    <dbReference type="NCBI Taxonomy" id="258594"/>
    <lineage>
        <taxon>Bacteria</taxon>
        <taxon>Pseudomonadati</taxon>
        <taxon>Pseudomonadota</taxon>
        <taxon>Alphaproteobacteria</taxon>
        <taxon>Hyphomicrobiales</taxon>
        <taxon>Nitrobacteraceae</taxon>
        <taxon>Rhodopseudomonas</taxon>
    </lineage>
</organism>
<comment type="function">
    <text evidence="1">Acts as a chaperone.</text>
</comment>
<comment type="induction">
    <text evidence="1">By stress conditions e.g. heat shock.</text>
</comment>
<comment type="similarity">
    <text evidence="1">Belongs to the heat shock protein 70 family.</text>
</comment>
<evidence type="ECO:0000255" key="1">
    <source>
        <dbReference type="HAMAP-Rule" id="MF_00332"/>
    </source>
</evidence>
<evidence type="ECO:0000256" key="2">
    <source>
        <dbReference type="SAM" id="MobiDB-lite"/>
    </source>
</evidence>
<keyword id="KW-0067">ATP-binding</keyword>
<keyword id="KW-0143">Chaperone</keyword>
<keyword id="KW-0547">Nucleotide-binding</keyword>
<keyword id="KW-0597">Phosphoprotein</keyword>
<keyword id="KW-0346">Stress response</keyword>
<dbReference type="EMBL" id="BX572594">
    <property type="protein sequence ID" value="CAE25777.1"/>
    <property type="molecule type" value="Genomic_DNA"/>
</dbReference>
<dbReference type="RefSeq" id="WP_011155901.1">
    <property type="nucleotide sequence ID" value="NZ_CP116810.1"/>
</dbReference>
<dbReference type="SMR" id="Q6NCY4"/>
<dbReference type="STRING" id="258594.RPA0333"/>
<dbReference type="GeneID" id="66891344"/>
<dbReference type="eggNOG" id="COG0443">
    <property type="taxonomic scope" value="Bacteria"/>
</dbReference>
<dbReference type="HOGENOM" id="CLU_005965_2_1_5"/>
<dbReference type="PhylomeDB" id="Q6NCY4"/>
<dbReference type="GO" id="GO:0005524">
    <property type="term" value="F:ATP binding"/>
    <property type="evidence" value="ECO:0007669"/>
    <property type="project" value="UniProtKB-UniRule"/>
</dbReference>
<dbReference type="GO" id="GO:0140662">
    <property type="term" value="F:ATP-dependent protein folding chaperone"/>
    <property type="evidence" value="ECO:0007669"/>
    <property type="project" value="InterPro"/>
</dbReference>
<dbReference type="GO" id="GO:0051082">
    <property type="term" value="F:unfolded protein binding"/>
    <property type="evidence" value="ECO:0007669"/>
    <property type="project" value="InterPro"/>
</dbReference>
<dbReference type="CDD" id="cd11733">
    <property type="entry name" value="ASKHA_NBD_HSP70_HSPA9"/>
    <property type="match status" value="1"/>
</dbReference>
<dbReference type="FunFam" id="2.60.34.10:FF:000014">
    <property type="entry name" value="Chaperone protein DnaK HSP70"/>
    <property type="match status" value="1"/>
</dbReference>
<dbReference type="FunFam" id="3.30.420.40:FF:000020">
    <property type="entry name" value="Chaperone protein HscA homolog"/>
    <property type="match status" value="1"/>
</dbReference>
<dbReference type="FunFam" id="3.30.30.30:FF:000003">
    <property type="entry name" value="Heat shock protein 9"/>
    <property type="match status" value="1"/>
</dbReference>
<dbReference type="FunFam" id="1.20.1270.10:FF:000001">
    <property type="entry name" value="Molecular chaperone DnaK"/>
    <property type="match status" value="1"/>
</dbReference>
<dbReference type="FunFam" id="3.30.420.40:FF:000004">
    <property type="entry name" value="Molecular chaperone DnaK"/>
    <property type="match status" value="1"/>
</dbReference>
<dbReference type="FunFam" id="3.90.640.10:FF:000003">
    <property type="entry name" value="Molecular chaperone DnaK"/>
    <property type="match status" value="1"/>
</dbReference>
<dbReference type="Gene3D" id="1.20.1270.10">
    <property type="match status" value="1"/>
</dbReference>
<dbReference type="Gene3D" id="3.30.420.40">
    <property type="match status" value="2"/>
</dbReference>
<dbReference type="Gene3D" id="3.90.640.10">
    <property type="entry name" value="Actin, Chain A, domain 4"/>
    <property type="match status" value="1"/>
</dbReference>
<dbReference type="Gene3D" id="2.60.34.10">
    <property type="entry name" value="Substrate Binding Domain Of DNAk, Chain A, domain 1"/>
    <property type="match status" value="1"/>
</dbReference>
<dbReference type="HAMAP" id="MF_00332">
    <property type="entry name" value="DnaK"/>
    <property type="match status" value="1"/>
</dbReference>
<dbReference type="InterPro" id="IPR043129">
    <property type="entry name" value="ATPase_NBD"/>
</dbReference>
<dbReference type="InterPro" id="IPR012725">
    <property type="entry name" value="Chaperone_DnaK"/>
</dbReference>
<dbReference type="InterPro" id="IPR018181">
    <property type="entry name" value="Heat_shock_70_CS"/>
</dbReference>
<dbReference type="InterPro" id="IPR029048">
    <property type="entry name" value="HSP70_C_sf"/>
</dbReference>
<dbReference type="InterPro" id="IPR029047">
    <property type="entry name" value="HSP70_peptide-bd_sf"/>
</dbReference>
<dbReference type="InterPro" id="IPR013126">
    <property type="entry name" value="Hsp_70_fam"/>
</dbReference>
<dbReference type="NCBIfam" id="NF001413">
    <property type="entry name" value="PRK00290.1"/>
    <property type="match status" value="1"/>
</dbReference>
<dbReference type="NCBIfam" id="NF003520">
    <property type="entry name" value="PRK05183.1"/>
    <property type="match status" value="1"/>
</dbReference>
<dbReference type="NCBIfam" id="TIGR02350">
    <property type="entry name" value="prok_dnaK"/>
    <property type="match status" value="1"/>
</dbReference>
<dbReference type="PANTHER" id="PTHR19375">
    <property type="entry name" value="HEAT SHOCK PROTEIN 70KDA"/>
    <property type="match status" value="1"/>
</dbReference>
<dbReference type="Pfam" id="PF00012">
    <property type="entry name" value="HSP70"/>
    <property type="match status" value="1"/>
</dbReference>
<dbReference type="PRINTS" id="PR00301">
    <property type="entry name" value="HEATSHOCK70"/>
</dbReference>
<dbReference type="SUPFAM" id="SSF53067">
    <property type="entry name" value="Actin-like ATPase domain"/>
    <property type="match status" value="2"/>
</dbReference>
<dbReference type="SUPFAM" id="SSF100934">
    <property type="entry name" value="Heat shock protein 70kD (HSP70), C-terminal subdomain"/>
    <property type="match status" value="1"/>
</dbReference>
<dbReference type="SUPFAM" id="SSF100920">
    <property type="entry name" value="Heat shock protein 70kD (HSP70), peptide-binding domain"/>
    <property type="match status" value="1"/>
</dbReference>
<dbReference type="PROSITE" id="PS00297">
    <property type="entry name" value="HSP70_1"/>
    <property type="match status" value="1"/>
</dbReference>
<dbReference type="PROSITE" id="PS00329">
    <property type="entry name" value="HSP70_2"/>
    <property type="match status" value="1"/>
</dbReference>
<dbReference type="PROSITE" id="PS01036">
    <property type="entry name" value="HSP70_3"/>
    <property type="match status" value="1"/>
</dbReference>
<gene>
    <name evidence="1" type="primary">dnaK</name>
    <name type="ordered locus">RPA0333</name>
</gene>
<reference key="1">
    <citation type="journal article" date="2004" name="Nat. Biotechnol.">
        <title>Complete genome sequence of the metabolically versatile photosynthetic bacterium Rhodopseudomonas palustris.</title>
        <authorList>
            <person name="Larimer F.W."/>
            <person name="Chain P."/>
            <person name="Hauser L."/>
            <person name="Lamerdin J.E."/>
            <person name="Malfatti S."/>
            <person name="Do L."/>
            <person name="Land M.L."/>
            <person name="Pelletier D.A."/>
            <person name="Beatty J.T."/>
            <person name="Lang A.S."/>
            <person name="Tabita F.R."/>
            <person name="Gibson J.L."/>
            <person name="Hanson T.E."/>
            <person name="Bobst C."/>
            <person name="Torres y Torres J.L."/>
            <person name="Peres C."/>
            <person name="Harrison F.H."/>
            <person name="Gibson J."/>
            <person name="Harwood C.S."/>
        </authorList>
    </citation>
    <scope>NUCLEOTIDE SEQUENCE [LARGE SCALE GENOMIC DNA]</scope>
    <source>
        <strain>ATCC BAA-98 / CGA009</strain>
    </source>
</reference>
<sequence>MGKVIGIDLGTTNSCVAVMDGKSAKVIENAEGMRTTPSIVAITDDGERLVGQPAKRQAVTNPERTFFAVKRLIGRRYDDPMVEKDKGLVPYKIVKASNGDAWVEADGKTYSPSQVSAFILQKMKETAEAHLGQKVDQAVITVPAYFNDAQRQATKDAGKIAGLEVLRIINEPTAAALAYGLDKAKTGTIAVYDLGGGTFDVSILEIGDGVFEVKSTNGDTFLGGEDFDMRLVNYLADEFQKEQGIDLRKDKLALQRLKEAAEKAKIELSSTTQTEINLPFITADQSGPKHLTMKLTRAKFEALVDDLVQKTIEPCRKALKDAGLTAGEISEVVLVGGMTRMPKVQEVVKQLFGKEPHKGVNPDEVVAIGAAIQAGVLQGDVKDVLLLDVTPLSLGIETLGGVFTRIIDRNTTIPTKKSQVFSTAEDNQNAVTIRVFQGEREMAADNKMLGQFDLMGIPPAPRGMPQIEVTFDIDANGIVNVSAKDKATGKEQQIRIQASGGLSDSEIDKMVKDAEANAAEDKKRREAVDAKNHADALVHSTEKALAEHGSKVDESERRSIEDALSDLREALKGDDAEAIKAKSNTLAQASMKLGEAMYKQAEAAGGAQQAGKDDVVDAEFTEVDDDKKKSA</sequence>